<protein>
    <recommendedName>
        <fullName>Protein N-terminal glutamine amidohydrolase</fullName>
        <ecNumber evidence="2">3.5.1.122</ecNumber>
    </recommendedName>
    <alternativeName>
        <fullName>Protein NH2-terminal glutamine deamidase</fullName>
        <shortName>N-terminal Gln amidase</shortName>
        <shortName>Nt(Q)-amidase</shortName>
    </alternativeName>
    <alternativeName>
        <fullName>Protein tungus</fullName>
    </alternativeName>
</protein>
<accession>B3MCF3</accession>
<reference key="1">
    <citation type="journal article" date="2007" name="Nature">
        <title>Evolution of genes and genomes on the Drosophila phylogeny.</title>
        <authorList>
            <consortium name="Drosophila 12 genomes consortium"/>
        </authorList>
    </citation>
    <scope>NUCLEOTIDE SEQUENCE [LARGE SCALE GENOMIC DNA]</scope>
    <source>
        <strain>Tucson 14024-0371.13</strain>
    </source>
</reference>
<sequence length="205" mass="23955">MTTDFLFPKIADCSYVSCYCEENVWKLCEQVKRTRPEELSKCYAVFVSNEGRTVPLWRQKAGRGDDQVVIWDYHVFFMHNPSPNRCLVFDLDTTLPFPTYFHKYVTETFRSDLALRPEHHRFFRVIPADTYLIEFSSDRRHMRRPDGSWIKPPPSYPPILSNTNLHCLGDFICMSAGKGPGAVYSLSEFVHNFYKSPHVMAQNNK</sequence>
<keyword id="KW-0378">Hydrolase</keyword>
<keyword id="KW-1185">Reference proteome</keyword>
<organism>
    <name type="scientific">Drosophila ananassae</name>
    <name type="common">Fruit fly</name>
    <dbReference type="NCBI Taxonomy" id="7217"/>
    <lineage>
        <taxon>Eukaryota</taxon>
        <taxon>Metazoa</taxon>
        <taxon>Ecdysozoa</taxon>
        <taxon>Arthropoda</taxon>
        <taxon>Hexapoda</taxon>
        <taxon>Insecta</taxon>
        <taxon>Pterygota</taxon>
        <taxon>Neoptera</taxon>
        <taxon>Endopterygota</taxon>
        <taxon>Diptera</taxon>
        <taxon>Brachycera</taxon>
        <taxon>Muscomorpha</taxon>
        <taxon>Ephydroidea</taxon>
        <taxon>Drosophilidae</taxon>
        <taxon>Drosophila</taxon>
        <taxon>Sophophora</taxon>
    </lineage>
</organism>
<dbReference type="EC" id="3.5.1.122" evidence="2"/>
<dbReference type="EMBL" id="CH902619">
    <property type="protein sequence ID" value="EDV37277.1"/>
    <property type="molecule type" value="Genomic_DNA"/>
</dbReference>
<dbReference type="SMR" id="B3MCF3"/>
<dbReference type="FunCoup" id="B3MCF3">
    <property type="interactions" value="1490"/>
</dbReference>
<dbReference type="STRING" id="7217.B3MCF3"/>
<dbReference type="EnsemblMetazoa" id="FBtr0116200">
    <property type="protein sequence ID" value="FBpp0114692"/>
    <property type="gene ID" value="FBgn0088540"/>
</dbReference>
<dbReference type="EnsemblMetazoa" id="XM_001960419.4">
    <property type="protein sequence ID" value="XP_001960455.1"/>
    <property type="gene ID" value="LOC6494364"/>
</dbReference>
<dbReference type="GeneID" id="6494364"/>
<dbReference type="KEGG" id="dan:6494364"/>
<dbReference type="CTD" id="36743"/>
<dbReference type="eggNOG" id="KOG3261">
    <property type="taxonomic scope" value="Eukaryota"/>
</dbReference>
<dbReference type="HOGENOM" id="CLU_091083_1_0_1"/>
<dbReference type="InParanoid" id="B3MCF3"/>
<dbReference type="OMA" id="GWGTVYS"/>
<dbReference type="OrthoDB" id="191192at2759"/>
<dbReference type="PhylomeDB" id="B3MCF3"/>
<dbReference type="ChiTaRS" id="Zasp52">
    <property type="organism name" value="fly"/>
</dbReference>
<dbReference type="Proteomes" id="UP000007801">
    <property type="component" value="Unassembled WGS sequence"/>
</dbReference>
<dbReference type="GO" id="GO:0005829">
    <property type="term" value="C:cytosol"/>
    <property type="evidence" value="ECO:0007669"/>
    <property type="project" value="TreeGrafter"/>
</dbReference>
<dbReference type="GO" id="GO:0005634">
    <property type="term" value="C:nucleus"/>
    <property type="evidence" value="ECO:0007669"/>
    <property type="project" value="TreeGrafter"/>
</dbReference>
<dbReference type="GO" id="GO:0008418">
    <property type="term" value="F:protein-N-terminal asparagine amidohydrolase activity"/>
    <property type="evidence" value="ECO:0007669"/>
    <property type="project" value="InterPro"/>
</dbReference>
<dbReference type="GO" id="GO:0070773">
    <property type="term" value="F:protein-N-terminal glutamine amidohydrolase activity"/>
    <property type="evidence" value="ECO:0007669"/>
    <property type="project" value="UniProtKB-EC"/>
</dbReference>
<dbReference type="FunFam" id="3.10.620.10:FF:000001">
    <property type="entry name" value="Blast:Protein N-terminal glutamine amidohydrolase"/>
    <property type="match status" value="1"/>
</dbReference>
<dbReference type="Gene3D" id="3.10.620.10">
    <property type="entry name" value="Protein N-terminal glutamine amidohydrolase, alpha beta roll"/>
    <property type="match status" value="1"/>
</dbReference>
<dbReference type="InterPro" id="IPR037132">
    <property type="entry name" value="N_Gln_amidohydro_ab_roll_sf"/>
</dbReference>
<dbReference type="InterPro" id="IPR039733">
    <property type="entry name" value="NTAQ1"/>
</dbReference>
<dbReference type="InterPro" id="IPR023128">
    <property type="entry name" value="Prot_N_Gln_amidohydro_ab_roll"/>
</dbReference>
<dbReference type="PANTHER" id="PTHR13035">
    <property type="entry name" value="PROTEIN N-TERMINAL GLUTAMINE AMIDOHYDROLASE"/>
    <property type="match status" value="1"/>
</dbReference>
<dbReference type="PANTHER" id="PTHR13035:SF0">
    <property type="entry name" value="PROTEIN N-TERMINAL GLUTAMINE AMIDOHYDROLASE"/>
    <property type="match status" value="1"/>
</dbReference>
<dbReference type="Pfam" id="PF09764">
    <property type="entry name" value="Nt_Gln_amidase"/>
    <property type="match status" value="1"/>
</dbReference>
<feature type="chain" id="PRO_0000381823" description="Protein N-terminal glutamine amidohydrolase">
    <location>
        <begin position="1"/>
        <end position="205"/>
    </location>
</feature>
<feature type="active site" evidence="1">
    <location>
        <position position="20"/>
    </location>
</feature>
<feature type="active site" evidence="1">
    <location>
        <position position="74"/>
    </location>
</feature>
<feature type="active site" evidence="1">
    <location>
        <position position="90"/>
    </location>
</feature>
<name>NTAQ1_DROAN</name>
<evidence type="ECO:0000250" key="1"/>
<evidence type="ECO:0000250" key="2">
    <source>
        <dbReference type="UniProtKB" id="Q80WB5"/>
    </source>
</evidence>
<evidence type="ECO:0000250" key="3">
    <source>
        <dbReference type="UniProtKB" id="Q96HA8"/>
    </source>
</evidence>
<evidence type="ECO:0000305" key="4"/>
<proteinExistence type="inferred from homology"/>
<gene>
    <name type="primary">tun</name>
    <name type="ORF">GF11500</name>
</gene>
<comment type="function">
    <text evidence="2">Mediates the side-chain deamidation of N-terminal glutamine residues to glutamate, an important step in N-end rule pathway of protein degradation. Conversion of the resulting N-terminal glutamine to glutamate renders the protein susceptible to arginylation, polyubiquitination and degradation as specified by the N-end rule. Does not act on substrates with internal or C-terminal glutamine and does not act on non-glutamine residues in any position.</text>
</comment>
<comment type="catalytic activity">
    <reaction evidence="2">
        <text>N-terminal L-glutaminyl-[protein] + H2O = N-terminal L-glutamyl-[protein] + NH4(+)</text>
        <dbReference type="Rhea" id="RHEA:50680"/>
        <dbReference type="Rhea" id="RHEA-COMP:12668"/>
        <dbReference type="Rhea" id="RHEA-COMP:12777"/>
        <dbReference type="ChEBI" id="CHEBI:15377"/>
        <dbReference type="ChEBI" id="CHEBI:28938"/>
        <dbReference type="ChEBI" id="CHEBI:64721"/>
        <dbReference type="ChEBI" id="CHEBI:64722"/>
        <dbReference type="EC" id="3.5.1.122"/>
    </reaction>
</comment>
<comment type="subunit">
    <text evidence="3">Monomer.</text>
</comment>
<comment type="similarity">
    <text evidence="4">Belongs to the NTAQ1 family.</text>
</comment>